<comment type="catalytic activity">
    <reaction evidence="1">
        <text>(S)-4-amino-5-oxopentanoate = 5-aminolevulinate</text>
        <dbReference type="Rhea" id="RHEA:14265"/>
        <dbReference type="ChEBI" id="CHEBI:57501"/>
        <dbReference type="ChEBI" id="CHEBI:356416"/>
        <dbReference type="EC" id="5.4.3.8"/>
    </reaction>
</comment>
<comment type="cofactor">
    <cofactor evidence="1">
        <name>pyridoxal 5'-phosphate</name>
        <dbReference type="ChEBI" id="CHEBI:597326"/>
    </cofactor>
</comment>
<comment type="pathway">
    <text evidence="1">Porphyrin-containing compound metabolism; protoporphyrin-IX biosynthesis; 5-aminolevulinate from L-glutamyl-tRNA(Glu): step 2/2.</text>
</comment>
<comment type="subunit">
    <text evidence="1">Homodimer.</text>
</comment>
<comment type="subcellular location">
    <subcellularLocation>
        <location evidence="1">Cytoplasm</location>
    </subcellularLocation>
</comment>
<comment type="similarity">
    <text evidence="1">Belongs to the class-III pyridoxal-phosphate-dependent aminotransferase family. HemL subfamily.</text>
</comment>
<organism>
    <name type="scientific">Acinetobacter baumannii (strain ACICU)</name>
    <dbReference type="NCBI Taxonomy" id="405416"/>
    <lineage>
        <taxon>Bacteria</taxon>
        <taxon>Pseudomonadati</taxon>
        <taxon>Pseudomonadota</taxon>
        <taxon>Gammaproteobacteria</taxon>
        <taxon>Moraxellales</taxon>
        <taxon>Moraxellaceae</taxon>
        <taxon>Acinetobacter</taxon>
        <taxon>Acinetobacter calcoaceticus/baumannii complex</taxon>
    </lineage>
</organism>
<dbReference type="EC" id="5.4.3.8" evidence="1"/>
<dbReference type="EMBL" id="CP000863">
    <property type="protein sequence ID" value="ACC57984.1"/>
    <property type="molecule type" value="Genomic_DNA"/>
</dbReference>
<dbReference type="RefSeq" id="WP_000059234.1">
    <property type="nucleotide sequence ID" value="NZ_CP031380.1"/>
</dbReference>
<dbReference type="SMR" id="B2HW19"/>
<dbReference type="KEGG" id="abc:ACICU_02672"/>
<dbReference type="HOGENOM" id="CLU_016922_1_5_6"/>
<dbReference type="UniPathway" id="UPA00251">
    <property type="reaction ID" value="UER00317"/>
</dbReference>
<dbReference type="Proteomes" id="UP000008839">
    <property type="component" value="Chromosome"/>
</dbReference>
<dbReference type="GO" id="GO:0005737">
    <property type="term" value="C:cytoplasm"/>
    <property type="evidence" value="ECO:0007669"/>
    <property type="project" value="UniProtKB-SubCell"/>
</dbReference>
<dbReference type="GO" id="GO:0042286">
    <property type="term" value="F:glutamate-1-semialdehyde 2,1-aminomutase activity"/>
    <property type="evidence" value="ECO:0007669"/>
    <property type="project" value="UniProtKB-UniRule"/>
</dbReference>
<dbReference type="GO" id="GO:0030170">
    <property type="term" value="F:pyridoxal phosphate binding"/>
    <property type="evidence" value="ECO:0007669"/>
    <property type="project" value="InterPro"/>
</dbReference>
<dbReference type="GO" id="GO:0008483">
    <property type="term" value="F:transaminase activity"/>
    <property type="evidence" value="ECO:0007669"/>
    <property type="project" value="InterPro"/>
</dbReference>
<dbReference type="GO" id="GO:0006782">
    <property type="term" value="P:protoporphyrinogen IX biosynthetic process"/>
    <property type="evidence" value="ECO:0007669"/>
    <property type="project" value="UniProtKB-UniRule"/>
</dbReference>
<dbReference type="CDD" id="cd00610">
    <property type="entry name" value="OAT_like"/>
    <property type="match status" value="1"/>
</dbReference>
<dbReference type="FunFam" id="3.40.640.10:FF:000021">
    <property type="entry name" value="Glutamate-1-semialdehyde 2,1-aminomutase"/>
    <property type="match status" value="1"/>
</dbReference>
<dbReference type="Gene3D" id="3.90.1150.10">
    <property type="entry name" value="Aspartate Aminotransferase, domain 1"/>
    <property type="match status" value="1"/>
</dbReference>
<dbReference type="Gene3D" id="3.40.640.10">
    <property type="entry name" value="Type I PLP-dependent aspartate aminotransferase-like (Major domain)"/>
    <property type="match status" value="1"/>
</dbReference>
<dbReference type="HAMAP" id="MF_00375">
    <property type="entry name" value="HemL_aminotrans_3"/>
    <property type="match status" value="1"/>
</dbReference>
<dbReference type="InterPro" id="IPR004639">
    <property type="entry name" value="4pyrrol_synth_GluAld_NH2Trfase"/>
</dbReference>
<dbReference type="InterPro" id="IPR005814">
    <property type="entry name" value="Aminotrans_3"/>
</dbReference>
<dbReference type="InterPro" id="IPR049704">
    <property type="entry name" value="Aminotrans_3_PPA_site"/>
</dbReference>
<dbReference type="InterPro" id="IPR015424">
    <property type="entry name" value="PyrdxlP-dep_Trfase"/>
</dbReference>
<dbReference type="InterPro" id="IPR015421">
    <property type="entry name" value="PyrdxlP-dep_Trfase_major"/>
</dbReference>
<dbReference type="InterPro" id="IPR015422">
    <property type="entry name" value="PyrdxlP-dep_Trfase_small"/>
</dbReference>
<dbReference type="NCBIfam" id="TIGR00713">
    <property type="entry name" value="hemL"/>
    <property type="match status" value="1"/>
</dbReference>
<dbReference type="NCBIfam" id="NF000818">
    <property type="entry name" value="PRK00062.1"/>
    <property type="match status" value="1"/>
</dbReference>
<dbReference type="PANTHER" id="PTHR43713">
    <property type="entry name" value="GLUTAMATE-1-SEMIALDEHYDE 2,1-AMINOMUTASE"/>
    <property type="match status" value="1"/>
</dbReference>
<dbReference type="PANTHER" id="PTHR43713:SF3">
    <property type="entry name" value="GLUTAMATE-1-SEMIALDEHYDE 2,1-AMINOMUTASE 1, CHLOROPLASTIC-RELATED"/>
    <property type="match status" value="1"/>
</dbReference>
<dbReference type="Pfam" id="PF00202">
    <property type="entry name" value="Aminotran_3"/>
    <property type="match status" value="1"/>
</dbReference>
<dbReference type="SUPFAM" id="SSF53383">
    <property type="entry name" value="PLP-dependent transferases"/>
    <property type="match status" value="1"/>
</dbReference>
<dbReference type="PROSITE" id="PS00600">
    <property type="entry name" value="AA_TRANSFER_CLASS_3"/>
    <property type="match status" value="1"/>
</dbReference>
<sequence length="432" mass="46391">MSLSPKQEQLFKQASKHIPGGVNSPVRAFNGVGGTPVFIEKAKGAYLWDVDGKRYVDYVGSWGPMILGHAHPDIIKAVQTAAEDGLSFGAPTVHETTLADIICEIMPSIELVRMTNSGTEATMTAIRLARGYTGRDKIVKFEGCYHGHSDSLLVKAGSGLLTKGEGEPTSKGVPADFAKHTLTLPYNDVAALKECFAKFGHEIAGVIIEPVAGNMNMVKPIDGFLQAIRDVCDEYKSVFIIDEVMTGFRVALGGAQSVYNVKPDLTTLGKIIGAGLPVGAFGGKREIMECIAPLGGVYQAGTLSGNPLAMRAGIEMFKHLRQPDFYSKLSAQLEKLLAGLQAAADEAGIPFKTQQAGAMFGLYFTDQEDITSFDSMLACDIEAFKKFFHGMLKRGVNLAPSAFEAGFISSAHSDEDIEFTIQAAKETFAEMK</sequence>
<accession>B2HW19</accession>
<proteinExistence type="inferred from homology"/>
<protein>
    <recommendedName>
        <fullName evidence="1">Glutamate-1-semialdehyde 2,1-aminomutase</fullName>
        <shortName evidence="1">GSA</shortName>
        <ecNumber evidence="1">5.4.3.8</ecNumber>
    </recommendedName>
    <alternativeName>
        <fullName evidence="1">Glutamate-1-semialdehyde aminotransferase</fullName>
        <shortName evidence="1">GSA-AT</shortName>
    </alternativeName>
</protein>
<evidence type="ECO:0000255" key="1">
    <source>
        <dbReference type="HAMAP-Rule" id="MF_00375"/>
    </source>
</evidence>
<gene>
    <name evidence="1" type="primary">hemL</name>
    <name type="ordered locus">ACICU_02672</name>
</gene>
<feature type="chain" id="PRO_1000121847" description="Glutamate-1-semialdehyde 2,1-aminomutase">
    <location>
        <begin position="1"/>
        <end position="432"/>
    </location>
</feature>
<feature type="modified residue" description="N6-(pyridoxal phosphate)lysine" evidence="1">
    <location>
        <position position="270"/>
    </location>
</feature>
<name>GSA_ACIBC</name>
<reference key="1">
    <citation type="journal article" date="2008" name="Antimicrob. Agents Chemother.">
        <title>Whole-genome pyrosequencing of an epidemic multidrug-resistant Acinetobacter baumannii strain belonging to the European clone II group.</title>
        <authorList>
            <person name="Iacono M."/>
            <person name="Villa L."/>
            <person name="Fortini D."/>
            <person name="Bordoni R."/>
            <person name="Imperi F."/>
            <person name="Bonnal R.J."/>
            <person name="Sicheritz-Ponten T."/>
            <person name="De Bellis G."/>
            <person name="Visca P."/>
            <person name="Cassone A."/>
            <person name="Carattoli A."/>
        </authorList>
    </citation>
    <scope>NUCLEOTIDE SEQUENCE [LARGE SCALE GENOMIC DNA]</scope>
    <source>
        <strain>ACICU</strain>
    </source>
</reference>
<keyword id="KW-0963">Cytoplasm</keyword>
<keyword id="KW-0413">Isomerase</keyword>
<keyword id="KW-0627">Porphyrin biosynthesis</keyword>
<keyword id="KW-0663">Pyridoxal phosphate</keyword>